<evidence type="ECO:0000255" key="1"/>
<evidence type="ECO:0000269" key="2">
    <source>
    </source>
</evidence>
<evidence type="ECO:0000269" key="3">
    <source>
    </source>
</evidence>
<evidence type="ECO:0000303" key="4">
    <source>
    </source>
</evidence>
<evidence type="ECO:0000305" key="5"/>
<evidence type="ECO:0000312" key="6">
    <source>
        <dbReference type="Araport" id="AT5G04490"/>
    </source>
</evidence>
<evidence type="ECO:0000312" key="7">
    <source>
        <dbReference type="EMBL" id="CAB85555.1"/>
    </source>
</evidence>
<feature type="transit peptide" description="Chloroplast" evidence="1">
    <location>
        <begin position="1"/>
        <end position="59"/>
    </location>
</feature>
<feature type="chain" id="PRO_0000226591" description="Phytol kinase 1, chloroplastic">
    <location>
        <begin position="60"/>
        <end position="304"/>
    </location>
</feature>
<feature type="transmembrane region" description="Helical" evidence="1">
    <location>
        <begin position="71"/>
        <end position="91"/>
    </location>
</feature>
<feature type="transmembrane region" description="Helical" evidence="1">
    <location>
        <begin position="105"/>
        <end position="125"/>
    </location>
</feature>
<feature type="transmembrane region" description="Helical" evidence="1">
    <location>
        <begin position="129"/>
        <end position="149"/>
    </location>
</feature>
<feature type="transmembrane region" description="Helical" evidence="1">
    <location>
        <begin position="167"/>
        <end position="187"/>
    </location>
</feature>
<feature type="transmembrane region" description="Helical" evidence="1">
    <location>
        <begin position="191"/>
        <end position="211"/>
    </location>
</feature>
<feature type="transmembrane region" description="Helical" evidence="1">
    <location>
        <begin position="227"/>
        <end position="247"/>
    </location>
</feature>
<feature type="mutagenesis site" description="In lt1/vte5-1; 80% reduction in total seed tocopherols.">
    <location>
        <begin position="227"/>
        <end position="304"/>
    </location>
</feature>
<feature type="sequence conflict" description="In Ref. 3; AAO42044." evidence="5" ref="3">
    <original>T</original>
    <variation>A</variation>
    <location>
        <position position="74"/>
    </location>
</feature>
<feature type="sequence conflict" description="In Ref. 4; AAM61593." evidence="5" ref="4">
    <original>M</original>
    <variation>I</variation>
    <location>
        <position position="256"/>
    </location>
</feature>
<feature type="sequence conflict" description="In Ref. 4; AAM61593." evidence="5" ref="4">
    <original>M</original>
    <variation>I</variation>
    <location>
        <position position="267"/>
    </location>
</feature>
<feature type="sequence conflict" description="In Ref. 4; AAM61593." evidence="5" ref="4">
    <original>I</original>
    <variation>V</variation>
    <location>
        <position position="288"/>
    </location>
</feature>
<feature type="sequence conflict" description="In Ref. 4; AAM61593." evidence="5" ref="4">
    <original>A</original>
    <variation>T</variation>
    <location>
        <position position="297"/>
    </location>
</feature>
<keyword id="KW-0150">Chloroplast</keyword>
<keyword id="KW-0418">Kinase</keyword>
<keyword id="KW-0472">Membrane</keyword>
<keyword id="KW-0934">Plastid</keyword>
<keyword id="KW-1185">Reference proteome</keyword>
<keyword id="KW-0808">Transferase</keyword>
<keyword id="KW-0809">Transit peptide</keyword>
<keyword id="KW-0812">Transmembrane</keyword>
<keyword id="KW-1133">Transmembrane helix</keyword>
<accession>Q9LZ76</accession>
<accession>Q84WC0</accession>
<accession>Q8LF61</accession>
<name>PHYK1_ARATH</name>
<reference key="1">
    <citation type="journal article" date="2000" name="Nature">
        <title>Sequence and analysis of chromosome 5 of the plant Arabidopsis thaliana.</title>
        <authorList>
            <person name="Tabata S."/>
            <person name="Kaneko T."/>
            <person name="Nakamura Y."/>
            <person name="Kotani H."/>
            <person name="Kato T."/>
            <person name="Asamizu E."/>
            <person name="Miyajima N."/>
            <person name="Sasamoto S."/>
            <person name="Kimura T."/>
            <person name="Hosouchi T."/>
            <person name="Kawashima K."/>
            <person name="Kohara M."/>
            <person name="Matsumoto M."/>
            <person name="Matsuno A."/>
            <person name="Muraki A."/>
            <person name="Nakayama S."/>
            <person name="Nakazaki N."/>
            <person name="Naruo K."/>
            <person name="Okumura S."/>
            <person name="Shinpo S."/>
            <person name="Takeuchi C."/>
            <person name="Wada T."/>
            <person name="Watanabe A."/>
            <person name="Yamada M."/>
            <person name="Yasuda M."/>
            <person name="Sato S."/>
            <person name="de la Bastide M."/>
            <person name="Huang E."/>
            <person name="Spiegel L."/>
            <person name="Gnoj L."/>
            <person name="O'Shaughnessy A."/>
            <person name="Preston R."/>
            <person name="Habermann K."/>
            <person name="Murray J."/>
            <person name="Johnson D."/>
            <person name="Rohlfing T."/>
            <person name="Nelson J."/>
            <person name="Stoneking T."/>
            <person name="Pepin K."/>
            <person name="Spieth J."/>
            <person name="Sekhon M."/>
            <person name="Armstrong J."/>
            <person name="Becker M."/>
            <person name="Belter E."/>
            <person name="Cordum H."/>
            <person name="Cordes M."/>
            <person name="Courtney L."/>
            <person name="Courtney W."/>
            <person name="Dante M."/>
            <person name="Du H."/>
            <person name="Edwards J."/>
            <person name="Fryman J."/>
            <person name="Haakensen B."/>
            <person name="Lamar E."/>
            <person name="Latreille P."/>
            <person name="Leonard S."/>
            <person name="Meyer R."/>
            <person name="Mulvaney E."/>
            <person name="Ozersky P."/>
            <person name="Riley A."/>
            <person name="Strowmatt C."/>
            <person name="Wagner-McPherson C."/>
            <person name="Wollam A."/>
            <person name="Yoakum M."/>
            <person name="Bell M."/>
            <person name="Dedhia N."/>
            <person name="Parnell L."/>
            <person name="Shah R."/>
            <person name="Rodriguez M."/>
            <person name="Hoon See L."/>
            <person name="Vil D."/>
            <person name="Baker J."/>
            <person name="Kirchoff K."/>
            <person name="Toth K."/>
            <person name="King L."/>
            <person name="Bahret A."/>
            <person name="Miller B."/>
            <person name="Marra M.A."/>
            <person name="Martienssen R."/>
            <person name="McCombie W.R."/>
            <person name="Wilson R.K."/>
            <person name="Murphy G."/>
            <person name="Bancroft I."/>
            <person name="Volckaert G."/>
            <person name="Wambutt R."/>
            <person name="Duesterhoeft A."/>
            <person name="Stiekema W."/>
            <person name="Pohl T."/>
            <person name="Entian K.-D."/>
            <person name="Terryn N."/>
            <person name="Hartley N."/>
            <person name="Bent E."/>
            <person name="Johnson S."/>
            <person name="Langham S.-A."/>
            <person name="McCullagh B."/>
            <person name="Robben J."/>
            <person name="Grymonprez B."/>
            <person name="Zimmermann W."/>
            <person name="Ramsperger U."/>
            <person name="Wedler H."/>
            <person name="Balke K."/>
            <person name="Wedler E."/>
            <person name="Peters S."/>
            <person name="van Staveren M."/>
            <person name="Dirkse W."/>
            <person name="Mooijman P."/>
            <person name="Klein Lankhorst R."/>
            <person name="Weitzenegger T."/>
            <person name="Bothe G."/>
            <person name="Rose M."/>
            <person name="Hauf J."/>
            <person name="Berneiser S."/>
            <person name="Hempel S."/>
            <person name="Feldpausch M."/>
            <person name="Lamberth S."/>
            <person name="Villarroel R."/>
            <person name="Gielen J."/>
            <person name="Ardiles W."/>
            <person name="Bents O."/>
            <person name="Lemcke K."/>
            <person name="Kolesov G."/>
            <person name="Mayer K.F.X."/>
            <person name="Rudd S."/>
            <person name="Schoof H."/>
            <person name="Schueller C."/>
            <person name="Zaccaria P."/>
            <person name="Mewes H.-W."/>
            <person name="Bevan M."/>
            <person name="Fransz P.F."/>
        </authorList>
    </citation>
    <scope>NUCLEOTIDE SEQUENCE [LARGE SCALE GENOMIC DNA]</scope>
    <source>
        <strain>cv. Columbia</strain>
    </source>
</reference>
<reference key="2">
    <citation type="journal article" date="2017" name="Plant J.">
        <title>Araport11: a complete reannotation of the Arabidopsis thaliana reference genome.</title>
        <authorList>
            <person name="Cheng C.Y."/>
            <person name="Krishnakumar V."/>
            <person name="Chan A.P."/>
            <person name="Thibaud-Nissen F."/>
            <person name="Schobel S."/>
            <person name="Town C.D."/>
        </authorList>
    </citation>
    <scope>GENOME REANNOTATION</scope>
    <source>
        <strain>cv. Columbia</strain>
    </source>
</reference>
<reference key="3">
    <citation type="journal article" date="2003" name="Science">
        <title>Empirical analysis of transcriptional activity in the Arabidopsis genome.</title>
        <authorList>
            <person name="Yamada K."/>
            <person name="Lim J."/>
            <person name="Dale J.M."/>
            <person name="Chen H."/>
            <person name="Shinn P."/>
            <person name="Palm C.J."/>
            <person name="Southwick A.M."/>
            <person name="Wu H.C."/>
            <person name="Kim C.J."/>
            <person name="Nguyen M."/>
            <person name="Pham P.K."/>
            <person name="Cheuk R.F."/>
            <person name="Karlin-Newmann G."/>
            <person name="Liu S.X."/>
            <person name="Lam B."/>
            <person name="Sakano H."/>
            <person name="Wu T."/>
            <person name="Yu G."/>
            <person name="Miranda M."/>
            <person name="Quach H.L."/>
            <person name="Tripp M."/>
            <person name="Chang C.H."/>
            <person name="Lee J.M."/>
            <person name="Toriumi M.J."/>
            <person name="Chan M.M."/>
            <person name="Tang C.C."/>
            <person name="Onodera C.S."/>
            <person name="Deng J.M."/>
            <person name="Akiyama K."/>
            <person name="Ansari Y."/>
            <person name="Arakawa T."/>
            <person name="Banh J."/>
            <person name="Banno F."/>
            <person name="Bowser L."/>
            <person name="Brooks S.Y."/>
            <person name="Carninci P."/>
            <person name="Chao Q."/>
            <person name="Choy N."/>
            <person name="Enju A."/>
            <person name="Goldsmith A.D."/>
            <person name="Gurjal M."/>
            <person name="Hansen N.F."/>
            <person name="Hayashizaki Y."/>
            <person name="Johnson-Hopson C."/>
            <person name="Hsuan V.W."/>
            <person name="Iida K."/>
            <person name="Karnes M."/>
            <person name="Khan S."/>
            <person name="Koesema E."/>
            <person name="Ishida J."/>
            <person name="Jiang P.X."/>
            <person name="Jones T."/>
            <person name="Kawai J."/>
            <person name="Kamiya A."/>
            <person name="Meyers C."/>
            <person name="Nakajima M."/>
            <person name="Narusaka M."/>
            <person name="Seki M."/>
            <person name="Sakurai T."/>
            <person name="Satou M."/>
            <person name="Tamse R."/>
            <person name="Vaysberg M."/>
            <person name="Wallender E.K."/>
            <person name="Wong C."/>
            <person name="Yamamura Y."/>
            <person name="Yuan S."/>
            <person name="Shinozaki K."/>
            <person name="Davis R.W."/>
            <person name="Theologis A."/>
            <person name="Ecker J.R."/>
        </authorList>
    </citation>
    <scope>NUCLEOTIDE SEQUENCE [LARGE SCALE MRNA]</scope>
    <source>
        <strain>cv. Columbia</strain>
    </source>
</reference>
<reference key="4">
    <citation type="submission" date="2002-03" db="EMBL/GenBank/DDBJ databases">
        <title>Full-length cDNA from Arabidopsis thaliana.</title>
        <authorList>
            <person name="Brover V.V."/>
            <person name="Troukhan M.E."/>
            <person name="Alexandrov N.A."/>
            <person name="Lu Y.-P."/>
            <person name="Flavell R.B."/>
            <person name="Feldmann K.A."/>
        </authorList>
    </citation>
    <scope>NUCLEOTIDE SEQUENCE [LARGE SCALE MRNA]</scope>
</reference>
<reference key="5">
    <citation type="submission" date="2005-03" db="EMBL/GenBank/DDBJ databases">
        <title>Arabidopsis ORF clones.</title>
        <authorList>
            <person name="Kim C.J."/>
            <person name="Chen H."/>
            <person name="Cheuk R.F."/>
            <person name="Shinn P."/>
            <person name="Ecker J.R."/>
        </authorList>
    </citation>
    <scope>NUCLEOTIDE SEQUENCE [LARGE SCALE MRNA]</scope>
    <source>
        <strain>cv. Columbia</strain>
    </source>
</reference>
<reference key="6">
    <citation type="journal article" date="2006" name="Plant Cell">
        <title>The Arabidopsis vitamin E pathway gene5-1 mutant reveals a critical role for phytol kinase in seed tocopherol biosynthesis.</title>
        <authorList>
            <person name="Valentin H.E."/>
            <person name="Lincoln K."/>
            <person name="Moshiri F."/>
            <person name="Jensen P.K."/>
            <person name="Qi Q."/>
            <person name="Venkatesh T.V."/>
            <person name="Karunanandaa B."/>
            <person name="Baszis S.R."/>
            <person name="Norris S.R."/>
            <person name="Savidge B."/>
            <person name="Gruys K.J."/>
            <person name="Last R.L."/>
        </authorList>
    </citation>
    <scope>FUNCTION</scope>
    <scope>CATALYTIC ACTIVITY</scope>
    <scope>DEVELOPMENTAL STAGE</scope>
    <scope>MUTANT LT1/VTE5-1</scope>
</reference>
<reference key="7">
    <citation type="journal article" date="2015" name="Plant Cell">
        <title>Remobilization of phytol from chlorophyll degradation is essential for tocopherol synthesis and growth of Arabidopsis.</title>
        <authorList>
            <person name="Vom Dorp K."/>
            <person name="Hoelzl G."/>
            <person name="Plohmann C."/>
            <person name="Eisenhut M."/>
            <person name="Abraham M."/>
            <person name="Weber A.P."/>
            <person name="Hanson A.D."/>
            <person name="Doermann P."/>
        </authorList>
    </citation>
    <scope>DISRUPTION PHENOTYPE</scope>
    <scope>GENE FAMILY</scope>
</reference>
<proteinExistence type="evidence at protein level"/>
<protein>
    <recommendedName>
        <fullName evidence="5">Phytol kinase 1, chloroplastic</fullName>
        <ecNumber evidence="2">2.7.1.182</ecNumber>
    </recommendedName>
    <alternativeName>
        <fullName evidence="4">Vitamin E pathway gene 5 protein</fullName>
    </alternativeName>
</protein>
<gene>
    <name evidence="4" type="primary">VTE5</name>
    <name evidence="6" type="ordered locus">At5g04490</name>
    <name evidence="7" type="ORF">T32M21_90</name>
</gene>
<organism>
    <name type="scientific">Arabidopsis thaliana</name>
    <name type="common">Mouse-ear cress</name>
    <dbReference type="NCBI Taxonomy" id="3702"/>
    <lineage>
        <taxon>Eukaryota</taxon>
        <taxon>Viridiplantae</taxon>
        <taxon>Streptophyta</taxon>
        <taxon>Embryophyta</taxon>
        <taxon>Tracheophyta</taxon>
        <taxon>Spermatophyta</taxon>
        <taxon>Magnoliopsida</taxon>
        <taxon>eudicotyledons</taxon>
        <taxon>Gunneridae</taxon>
        <taxon>Pentapetalae</taxon>
        <taxon>rosids</taxon>
        <taxon>malvids</taxon>
        <taxon>Brassicales</taxon>
        <taxon>Brassicaceae</taxon>
        <taxon>Camelineae</taxon>
        <taxon>Arabidopsis</taxon>
    </lineage>
</organism>
<dbReference type="EC" id="2.7.1.182" evidence="2"/>
<dbReference type="EMBL" id="AL162875">
    <property type="protein sequence ID" value="CAB85555.1"/>
    <property type="molecule type" value="Genomic_DNA"/>
</dbReference>
<dbReference type="EMBL" id="CP002688">
    <property type="protein sequence ID" value="AED90752.1"/>
    <property type="molecule type" value="Genomic_DNA"/>
</dbReference>
<dbReference type="EMBL" id="BT004006">
    <property type="protein sequence ID" value="AAO42044.1"/>
    <property type="molecule type" value="mRNA"/>
</dbReference>
<dbReference type="EMBL" id="AY085036">
    <property type="protein sequence ID" value="AAM61593.1"/>
    <property type="molecule type" value="mRNA"/>
</dbReference>
<dbReference type="EMBL" id="BT021123">
    <property type="protein sequence ID" value="AAX22258.1"/>
    <property type="molecule type" value="mRNA"/>
</dbReference>
<dbReference type="PIR" id="T48445">
    <property type="entry name" value="T48445"/>
</dbReference>
<dbReference type="RefSeq" id="NP_196069.1">
    <property type="nucleotide sequence ID" value="NM_120531.3"/>
</dbReference>
<dbReference type="FunCoup" id="Q9LZ76">
    <property type="interactions" value="306"/>
</dbReference>
<dbReference type="STRING" id="3702.Q9LZ76"/>
<dbReference type="SwissLipids" id="SLP:000001494"/>
<dbReference type="PaxDb" id="3702-AT5G04490.1"/>
<dbReference type="ProteomicsDB" id="234911"/>
<dbReference type="EnsemblPlants" id="AT5G04490.1">
    <property type="protein sequence ID" value="AT5G04490.1"/>
    <property type="gene ID" value="AT5G04490"/>
</dbReference>
<dbReference type="GeneID" id="830328"/>
<dbReference type="Gramene" id="AT5G04490.1">
    <property type="protein sequence ID" value="AT5G04490.1"/>
    <property type="gene ID" value="AT5G04490"/>
</dbReference>
<dbReference type="KEGG" id="ath:AT5G04490"/>
<dbReference type="Araport" id="AT5G04490"/>
<dbReference type="TAIR" id="AT5G04490">
    <property type="gene designation" value="VTE5"/>
</dbReference>
<dbReference type="eggNOG" id="KOG4453">
    <property type="taxonomic scope" value="Eukaryota"/>
</dbReference>
<dbReference type="HOGENOM" id="CLU_058561_3_0_1"/>
<dbReference type="InParanoid" id="Q9LZ76"/>
<dbReference type="OMA" id="SWPIFST"/>
<dbReference type="PhylomeDB" id="Q9LZ76"/>
<dbReference type="BioCyc" id="ARA:AT5G04490-MONOMER"/>
<dbReference type="BioCyc" id="MetaCyc:AT5G04490-MONOMER"/>
<dbReference type="BRENDA" id="2.7.1.182">
    <property type="organism ID" value="399"/>
</dbReference>
<dbReference type="UniPathway" id="UPA00160"/>
<dbReference type="PRO" id="PR:Q9LZ76"/>
<dbReference type="Proteomes" id="UP000006548">
    <property type="component" value="Chromosome 5"/>
</dbReference>
<dbReference type="ExpressionAtlas" id="Q9LZ76">
    <property type="expression patterns" value="baseline and differential"/>
</dbReference>
<dbReference type="GO" id="GO:0009507">
    <property type="term" value="C:chloroplast"/>
    <property type="evidence" value="ECO:0007005"/>
    <property type="project" value="TAIR"/>
</dbReference>
<dbReference type="GO" id="GO:0031969">
    <property type="term" value="C:chloroplast membrane"/>
    <property type="evidence" value="ECO:0007669"/>
    <property type="project" value="UniProtKB-SubCell"/>
</dbReference>
<dbReference type="GO" id="GO:0010276">
    <property type="term" value="F:phytol kinase activity"/>
    <property type="evidence" value="ECO:0000314"/>
    <property type="project" value="TAIR"/>
</dbReference>
<dbReference type="GO" id="GO:0010189">
    <property type="term" value="P:vitamin E biosynthetic process"/>
    <property type="evidence" value="ECO:0000315"/>
    <property type="project" value="TAIR"/>
</dbReference>
<dbReference type="InterPro" id="IPR039606">
    <property type="entry name" value="Phytol/farnesol_kinase"/>
</dbReference>
<dbReference type="PANTHER" id="PTHR32523:SF8">
    <property type="entry name" value="DOLICHOL KINASE"/>
    <property type="match status" value="1"/>
</dbReference>
<dbReference type="PANTHER" id="PTHR32523">
    <property type="entry name" value="PHYTOL KINASE 1, CHLOROPLASTIC"/>
    <property type="match status" value="1"/>
</dbReference>
<sequence>MAATLPLSPINHQLCRFGNNSLTTHRFCSPGFLISSPCFIGLTGMGSATQLRARRSLISSAVATNSLLHDVGATVAVLGGAYALVLSFESLTKRNVIQQSLSRKLVHILSGLLFVLAWPIFSGSTEARYFAAFVPLVNGLRLVINGLSISPNSMLIKSVTREGRAEELLKGPLFYVLALLFSAVFFWRESPIGMISLAMMCGGDGIADIMGRKFGSTKIPYNPRKSWAGSISMFIFGFFISIALLYYYSSLGYLHMNWETTLQRVAMVSMVATVVESLPITDQLDDNISVPLATILAAYLSFGY</sequence>
<comment type="function">
    <text evidence="2">Kinase involved in the activation and reutilization of phytol from chlorophyll degradation in plant metabolism, including tocopherol biosynthesis. Catalyzes the conversion of phytol to phytol monophosphate (PMP) in the presence of CTP or UTP. No activity with ATP or GTP as phosphoryl donor.</text>
</comment>
<comment type="catalytic activity">
    <reaction evidence="2">
        <text>phytol + CTP = phytyl phosphate + CDP + H(+)</text>
        <dbReference type="Rhea" id="RHEA:38055"/>
        <dbReference type="ChEBI" id="CHEBI:15378"/>
        <dbReference type="ChEBI" id="CHEBI:17327"/>
        <dbReference type="ChEBI" id="CHEBI:37563"/>
        <dbReference type="ChEBI" id="CHEBI:58069"/>
        <dbReference type="ChEBI" id="CHEBI:75483"/>
        <dbReference type="EC" id="2.7.1.182"/>
    </reaction>
</comment>
<comment type="pathway">
    <text evidence="2 3">Cofactor biosynthesis; tocopherol biosynthesis.</text>
</comment>
<comment type="subcellular location">
    <subcellularLocation>
        <location evidence="5">Plastid</location>
        <location evidence="5">Chloroplast membrane</location>
        <topology evidence="5">Multi-pass membrane protein</topology>
    </subcellularLocation>
</comment>
<comment type="developmental stage">
    <text evidence="2">Highly expressed early in seed development and in 6-week-old senescent leaves.</text>
</comment>
<comment type="disruption phenotype">
    <text evidence="3">50% reduction in tocopherol content in leaves. Plants able to grow on soil and to produce fertile seeds. Vte5 and vte6 double mutants can grow photoautotrophically and show a stay-green phenotype with strongly delayed senescence and extended lifetime.</text>
</comment>
<comment type="similarity">
    <text evidence="5">Belongs to the polyprenol kinase family.</text>
</comment>